<dbReference type="EC" id="2.3.2.27"/>
<dbReference type="EC" id="2.7.11.-"/>
<dbReference type="EMBL" id="AB023044">
    <property type="protein sequence ID" value="BAA97390.1"/>
    <property type="molecule type" value="Genomic_DNA"/>
</dbReference>
<dbReference type="EMBL" id="CP002688">
    <property type="status" value="NOT_ANNOTATED_CDS"/>
    <property type="molecule type" value="Genomic_DNA"/>
</dbReference>
<dbReference type="SMR" id="Q9LU47"/>
<dbReference type="FunCoup" id="Q9LU47">
    <property type="interactions" value="4"/>
</dbReference>
<dbReference type="STRING" id="3702.Q9LU47"/>
<dbReference type="PaxDb" id="3702-AT5G51270.1"/>
<dbReference type="Araport" id="AT5G51270"/>
<dbReference type="TAIR" id="AT5G51270"/>
<dbReference type="eggNOG" id="ENOG502QQ92">
    <property type="taxonomic scope" value="Eukaryota"/>
</dbReference>
<dbReference type="HOGENOM" id="CLU_000288_153_1_1"/>
<dbReference type="InParanoid" id="Q9LU47"/>
<dbReference type="PhylomeDB" id="Q9LU47"/>
<dbReference type="UniPathway" id="UPA00143"/>
<dbReference type="PRO" id="PR:Q9LU47"/>
<dbReference type="Proteomes" id="UP000006548">
    <property type="component" value="Chromosome 5"/>
</dbReference>
<dbReference type="ExpressionAtlas" id="Q9LU47">
    <property type="expression patterns" value="baseline and differential"/>
</dbReference>
<dbReference type="GO" id="GO:0005524">
    <property type="term" value="F:ATP binding"/>
    <property type="evidence" value="ECO:0007669"/>
    <property type="project" value="UniProtKB-KW"/>
</dbReference>
<dbReference type="GO" id="GO:0106310">
    <property type="term" value="F:protein serine kinase activity"/>
    <property type="evidence" value="ECO:0007669"/>
    <property type="project" value="RHEA"/>
</dbReference>
<dbReference type="GO" id="GO:0004674">
    <property type="term" value="F:protein serine/threonine kinase activity"/>
    <property type="evidence" value="ECO:0007669"/>
    <property type="project" value="UniProtKB-KW"/>
</dbReference>
<dbReference type="GO" id="GO:0004842">
    <property type="term" value="F:ubiquitin-protein transferase activity"/>
    <property type="evidence" value="ECO:0007669"/>
    <property type="project" value="InterPro"/>
</dbReference>
<dbReference type="GO" id="GO:0016567">
    <property type="term" value="P:protein ubiquitination"/>
    <property type="evidence" value="ECO:0007669"/>
    <property type="project" value="UniProtKB-UniPathway"/>
</dbReference>
<dbReference type="CDD" id="cd16655">
    <property type="entry name" value="RING-Ubox_WDSUB1-like"/>
    <property type="match status" value="1"/>
</dbReference>
<dbReference type="CDD" id="cd01989">
    <property type="entry name" value="USP_STK_Ubox_N"/>
    <property type="match status" value="1"/>
</dbReference>
<dbReference type="Gene3D" id="3.40.50.620">
    <property type="entry name" value="HUPs"/>
    <property type="match status" value="1"/>
</dbReference>
<dbReference type="Gene3D" id="3.30.200.20">
    <property type="entry name" value="Phosphorylase Kinase, domain 1"/>
    <property type="match status" value="1"/>
</dbReference>
<dbReference type="Gene3D" id="1.10.510.10">
    <property type="entry name" value="Transferase(Phosphotransferase) domain 1"/>
    <property type="match status" value="1"/>
</dbReference>
<dbReference type="Gene3D" id="3.30.40.10">
    <property type="entry name" value="Zinc/RING finger domain, C3HC4 (zinc finger)"/>
    <property type="match status" value="1"/>
</dbReference>
<dbReference type="InterPro" id="IPR011009">
    <property type="entry name" value="Kinase-like_dom_sf"/>
</dbReference>
<dbReference type="InterPro" id="IPR000719">
    <property type="entry name" value="Prot_kinase_dom"/>
</dbReference>
<dbReference type="InterPro" id="IPR017441">
    <property type="entry name" value="Protein_kinase_ATP_BS"/>
</dbReference>
<dbReference type="InterPro" id="IPR014729">
    <property type="entry name" value="Rossmann-like_a/b/a_fold"/>
</dbReference>
<dbReference type="InterPro" id="IPR008271">
    <property type="entry name" value="Ser/Thr_kinase_AS"/>
</dbReference>
<dbReference type="InterPro" id="IPR051348">
    <property type="entry name" value="U-box_ubiquitin_ligases"/>
</dbReference>
<dbReference type="InterPro" id="IPR003613">
    <property type="entry name" value="Ubox_domain"/>
</dbReference>
<dbReference type="InterPro" id="IPR013083">
    <property type="entry name" value="Znf_RING/FYVE/PHD"/>
</dbReference>
<dbReference type="PANTHER" id="PTHR45647">
    <property type="entry name" value="OS02G0152300 PROTEIN"/>
    <property type="match status" value="1"/>
</dbReference>
<dbReference type="PANTHER" id="PTHR45647:SF54">
    <property type="entry name" value="U-BOX DOMAIN-CONTAINING PROTEIN 53-RELATED"/>
    <property type="match status" value="1"/>
</dbReference>
<dbReference type="Pfam" id="PF00069">
    <property type="entry name" value="Pkinase"/>
    <property type="match status" value="1"/>
</dbReference>
<dbReference type="Pfam" id="PF04564">
    <property type="entry name" value="U-box"/>
    <property type="match status" value="1"/>
</dbReference>
<dbReference type="SMART" id="SM00220">
    <property type="entry name" value="S_TKc"/>
    <property type="match status" value="1"/>
</dbReference>
<dbReference type="SMART" id="SM00504">
    <property type="entry name" value="Ubox"/>
    <property type="match status" value="1"/>
</dbReference>
<dbReference type="SUPFAM" id="SSF56112">
    <property type="entry name" value="Protein kinase-like (PK-like)"/>
    <property type="match status" value="1"/>
</dbReference>
<dbReference type="SUPFAM" id="SSF57850">
    <property type="entry name" value="RING/U-box"/>
    <property type="match status" value="1"/>
</dbReference>
<dbReference type="PROSITE" id="PS00107">
    <property type="entry name" value="PROTEIN_KINASE_ATP"/>
    <property type="match status" value="1"/>
</dbReference>
<dbReference type="PROSITE" id="PS50011">
    <property type="entry name" value="PROTEIN_KINASE_DOM"/>
    <property type="match status" value="1"/>
</dbReference>
<dbReference type="PROSITE" id="PS00108">
    <property type="entry name" value="PROTEIN_KINASE_ST"/>
    <property type="match status" value="1"/>
</dbReference>
<dbReference type="PROSITE" id="PS51698">
    <property type="entry name" value="U_BOX"/>
    <property type="match status" value="1"/>
</dbReference>
<sequence length="819" mass="91821">MDSFFKNSYLDPKAVRAQLPKRADLAAPSEPMTVALAISGSIKSKNVIKWALNKFGSDKNVTFKLIHIHPKITTLPTASGNIVSISEELEEVAAAYRQKVMQETKETLLKPFKKMCERKKLKIDETRFESSLTKVAVELQVLESNSVAVAITKEVNQHLISNLIIGRSSQAASSRNYDITASISASVSNLCTVYVVSNGGVHILAKDTSDTERNDTSIESGFERTSSSCSSGSGANSDVMSNALKSNPHTLSNKRMQNLPTIVRGVSVPMETSSTESDETKKRSSDAAEEASKRSSPETSRSVSWNPQFRDFDERKDAMSSMSSNFEYGNVVTPLGHYFTDNQDTLNEISKLRAELRHAHEMYAVAQVETLDASRKLNELKFEELTLLEHETKGIAKKETEKFEQKRREEREAAQRREAEMKATHEAKEKEKLEESSLVAPKLQYQEFTWEEIINATSSFSEDLKIGMGAYGDVYKCNLHHTIAAVKVLHSAESSLSKQFDQELEILSKIRHPHLVLLLGACPDHGALVYEYMENGSLEDRLFQVNDSQPIPWFVRLRIAWEVASALVFLHKSKPTPIIHRDLKPANILLNHNFVSKVGDVGLSTMIQAADPLSTKFTMYKQTSPVGTLCYIDPEYQRTGRISPKSDVYAFGMIILQLLTGQQAMALTYTVETAMENNNDDELIQILDEKAGNWPIEETRQLAALALQCTELRSKDRPDLEDQILPVLESLKKVADKARNSLSAAPSQPPSHFFCPLLKDVMKEPCIAADGYTYDRRAIEEWMENHRTSPVTNSPLQNVNLLPNHTLYAAIVEWRNRNQ</sequence>
<organism>
    <name type="scientific">Arabidopsis thaliana</name>
    <name type="common">Mouse-ear cress</name>
    <dbReference type="NCBI Taxonomy" id="3702"/>
    <lineage>
        <taxon>Eukaryota</taxon>
        <taxon>Viridiplantae</taxon>
        <taxon>Streptophyta</taxon>
        <taxon>Embryophyta</taxon>
        <taxon>Tracheophyta</taxon>
        <taxon>Spermatophyta</taxon>
        <taxon>Magnoliopsida</taxon>
        <taxon>eudicotyledons</taxon>
        <taxon>Gunneridae</taxon>
        <taxon>Pentapetalae</taxon>
        <taxon>rosids</taxon>
        <taxon>malvids</taxon>
        <taxon>Brassicales</taxon>
        <taxon>Brassicaceae</taxon>
        <taxon>Camelineae</taxon>
        <taxon>Arabidopsis</taxon>
    </lineage>
</organism>
<evidence type="ECO:0000250" key="1"/>
<evidence type="ECO:0000255" key="2"/>
<evidence type="ECO:0000255" key="3">
    <source>
        <dbReference type="PROSITE-ProRule" id="PRU00159"/>
    </source>
</evidence>
<evidence type="ECO:0000255" key="4">
    <source>
        <dbReference type="PROSITE-ProRule" id="PRU10027"/>
    </source>
</evidence>
<evidence type="ECO:0000256" key="5">
    <source>
        <dbReference type="SAM" id="MobiDB-lite"/>
    </source>
</evidence>
<evidence type="ECO:0000305" key="6"/>
<proteinExistence type="inferred from homology"/>
<protein>
    <recommendedName>
        <fullName>Putative U-box domain-containing protein 53</fullName>
    </recommendedName>
    <alternativeName>
        <fullName>Plant U-box protein 53</fullName>
    </alternativeName>
    <domain>
        <recommendedName>
            <fullName>E3 ubiquitin ligase</fullName>
            <ecNumber>2.3.2.27</ecNumber>
        </recommendedName>
        <alternativeName>
            <fullName evidence="6">RING-type E3 ubiquitin transferase</fullName>
        </alternativeName>
    </domain>
    <domain>
        <recommendedName>
            <fullName>Serine/threonine-protein kinase</fullName>
            <ecNumber>2.7.11.-</ecNumber>
        </recommendedName>
    </domain>
</protein>
<feature type="chain" id="PRO_0000322146" description="Putative U-box domain-containing protein 53">
    <location>
        <begin position="1"/>
        <end position="819"/>
    </location>
</feature>
<feature type="domain" description="Protein kinase" evidence="3">
    <location>
        <begin position="460"/>
        <end position="728"/>
    </location>
</feature>
<feature type="domain" description="U-box">
    <location>
        <begin position="748"/>
        <end position="819"/>
    </location>
</feature>
<feature type="region of interest" description="Disordered" evidence="5">
    <location>
        <begin position="208"/>
        <end position="309"/>
    </location>
</feature>
<feature type="region of interest" description="Disordered" evidence="5">
    <location>
        <begin position="398"/>
        <end position="433"/>
    </location>
</feature>
<feature type="coiled-coil region" evidence="2">
    <location>
        <begin position="395"/>
        <end position="437"/>
    </location>
</feature>
<feature type="compositionally biased region" description="Low complexity" evidence="5">
    <location>
        <begin position="223"/>
        <end position="237"/>
    </location>
</feature>
<feature type="compositionally biased region" description="Polar residues" evidence="5">
    <location>
        <begin position="238"/>
        <end position="260"/>
    </location>
</feature>
<feature type="compositionally biased region" description="Basic and acidic residues" evidence="5">
    <location>
        <begin position="278"/>
        <end position="296"/>
    </location>
</feature>
<feature type="compositionally biased region" description="Polar residues" evidence="5">
    <location>
        <begin position="297"/>
        <end position="307"/>
    </location>
</feature>
<feature type="active site" description="Proton acceptor" evidence="3 4">
    <location>
        <position position="582"/>
    </location>
</feature>
<feature type="binding site" evidence="3">
    <location>
        <begin position="466"/>
        <end position="474"/>
    </location>
    <ligand>
        <name>ATP</name>
        <dbReference type="ChEBI" id="CHEBI:30616"/>
    </ligand>
</feature>
<feature type="binding site" evidence="3">
    <location>
        <position position="487"/>
    </location>
    <ligand>
        <name>ATP</name>
        <dbReference type="ChEBI" id="CHEBI:30616"/>
    </ligand>
</feature>
<gene>
    <name type="primary">PUB53</name>
    <name type="ordered locus">At5g51270</name>
    <name type="ORF">MWD22.22</name>
</gene>
<name>PUB53_ARATH</name>
<comment type="function">
    <text evidence="1">Functions as an E3 ubiquitin ligase.</text>
</comment>
<comment type="catalytic activity">
    <reaction>
        <text>L-seryl-[protein] + ATP = O-phospho-L-seryl-[protein] + ADP + H(+)</text>
        <dbReference type="Rhea" id="RHEA:17989"/>
        <dbReference type="Rhea" id="RHEA-COMP:9863"/>
        <dbReference type="Rhea" id="RHEA-COMP:11604"/>
        <dbReference type="ChEBI" id="CHEBI:15378"/>
        <dbReference type="ChEBI" id="CHEBI:29999"/>
        <dbReference type="ChEBI" id="CHEBI:30616"/>
        <dbReference type="ChEBI" id="CHEBI:83421"/>
        <dbReference type="ChEBI" id="CHEBI:456216"/>
    </reaction>
</comment>
<comment type="catalytic activity">
    <reaction>
        <text>L-threonyl-[protein] + ATP = O-phospho-L-threonyl-[protein] + ADP + H(+)</text>
        <dbReference type="Rhea" id="RHEA:46608"/>
        <dbReference type="Rhea" id="RHEA-COMP:11060"/>
        <dbReference type="Rhea" id="RHEA-COMP:11605"/>
        <dbReference type="ChEBI" id="CHEBI:15378"/>
        <dbReference type="ChEBI" id="CHEBI:30013"/>
        <dbReference type="ChEBI" id="CHEBI:30616"/>
        <dbReference type="ChEBI" id="CHEBI:61977"/>
        <dbReference type="ChEBI" id="CHEBI:456216"/>
    </reaction>
</comment>
<comment type="catalytic activity">
    <reaction>
        <text>S-ubiquitinyl-[E2 ubiquitin-conjugating enzyme]-L-cysteine + [acceptor protein]-L-lysine = [E2 ubiquitin-conjugating enzyme]-L-cysteine + N(6)-ubiquitinyl-[acceptor protein]-L-lysine.</text>
        <dbReference type="EC" id="2.3.2.27"/>
    </reaction>
</comment>
<comment type="pathway">
    <text>Protein modification; protein ubiquitination.</text>
</comment>
<comment type="similarity">
    <text evidence="3">Belongs to the protein kinase superfamily. Ser/Thr protein kinase family.</text>
</comment>
<accession>Q9LU47</accession>
<keyword id="KW-0067">ATP-binding</keyword>
<keyword id="KW-0175">Coiled coil</keyword>
<keyword id="KW-0418">Kinase</keyword>
<keyword id="KW-0547">Nucleotide-binding</keyword>
<keyword id="KW-1185">Reference proteome</keyword>
<keyword id="KW-0723">Serine/threonine-protein kinase</keyword>
<keyword id="KW-0808">Transferase</keyword>
<keyword id="KW-0833">Ubl conjugation pathway</keyword>
<reference key="1">
    <citation type="journal article" date="2000" name="DNA Res.">
        <title>Structural analysis of Arabidopsis thaliana chromosome 5. X. Sequence features of the regions of 3,076,755 bp covered by sixty P1 and TAC clones.</title>
        <authorList>
            <person name="Sato S."/>
            <person name="Nakamura Y."/>
            <person name="Kaneko T."/>
            <person name="Katoh T."/>
            <person name="Asamizu E."/>
            <person name="Kotani H."/>
            <person name="Tabata S."/>
        </authorList>
    </citation>
    <scope>NUCLEOTIDE SEQUENCE [LARGE SCALE GENOMIC DNA]</scope>
    <source>
        <strain>cv. Columbia</strain>
    </source>
</reference>
<reference key="2">
    <citation type="journal article" date="2017" name="Plant J.">
        <title>Araport11: a complete reannotation of the Arabidopsis thaliana reference genome.</title>
        <authorList>
            <person name="Cheng C.Y."/>
            <person name="Krishnakumar V."/>
            <person name="Chan A.P."/>
            <person name="Thibaud-Nissen F."/>
            <person name="Schobel S."/>
            <person name="Town C.D."/>
        </authorList>
    </citation>
    <scope>GENOME REANNOTATION</scope>
    <source>
        <strain>cv. Columbia</strain>
    </source>
</reference>